<proteinExistence type="inferred from homology"/>
<organism>
    <name type="scientific">Bordetella parapertussis (strain 12822 / ATCC BAA-587 / NCTC 13253)</name>
    <dbReference type="NCBI Taxonomy" id="257311"/>
    <lineage>
        <taxon>Bacteria</taxon>
        <taxon>Pseudomonadati</taxon>
        <taxon>Pseudomonadota</taxon>
        <taxon>Betaproteobacteria</taxon>
        <taxon>Burkholderiales</taxon>
        <taxon>Alcaligenaceae</taxon>
        <taxon>Bordetella</taxon>
    </lineage>
</organism>
<sequence length="119" mass="12942">MTKSELIAALAARYPQLAARDTDYAVKTMLDAMTQALASGQRIEIRGFGSFSLSQRSPRIGRNPKSGEQVLVPGKQVPHFKAGKELRERVDLVGNDQGDDSSNGSSDPLQSVMDMHAMH</sequence>
<protein>
    <recommendedName>
        <fullName evidence="1">Integration host factor subunit beta</fullName>
        <shortName evidence="1">IHF-beta</shortName>
    </recommendedName>
</protein>
<feature type="chain" id="PRO_1000122184" description="Integration host factor subunit beta">
    <location>
        <begin position="1"/>
        <end position="119"/>
    </location>
</feature>
<feature type="region of interest" description="Disordered" evidence="2">
    <location>
        <begin position="91"/>
        <end position="119"/>
    </location>
</feature>
<feature type="compositionally biased region" description="Low complexity" evidence="2">
    <location>
        <begin position="94"/>
        <end position="107"/>
    </location>
</feature>
<name>IHFB_BORPA</name>
<comment type="function">
    <text evidence="1">This protein is one of the two subunits of integration host factor, a specific DNA-binding protein that functions in genetic recombination as well as in transcriptional and translational control.</text>
</comment>
<comment type="subunit">
    <text evidence="1">Heterodimer of an alpha and a beta chain.</text>
</comment>
<comment type="similarity">
    <text evidence="1">Belongs to the bacterial histone-like protein family.</text>
</comment>
<gene>
    <name evidence="1" type="primary">ihfB</name>
    <name evidence="1" type="synonym">himD</name>
    <name type="ordered locus">BPP3127</name>
</gene>
<reference key="1">
    <citation type="journal article" date="2003" name="Nat. Genet.">
        <title>Comparative analysis of the genome sequences of Bordetella pertussis, Bordetella parapertussis and Bordetella bronchiseptica.</title>
        <authorList>
            <person name="Parkhill J."/>
            <person name="Sebaihia M."/>
            <person name="Preston A."/>
            <person name="Murphy L.D."/>
            <person name="Thomson N.R."/>
            <person name="Harris D.E."/>
            <person name="Holden M.T.G."/>
            <person name="Churcher C.M."/>
            <person name="Bentley S.D."/>
            <person name="Mungall K.L."/>
            <person name="Cerdeno-Tarraga A.-M."/>
            <person name="Temple L."/>
            <person name="James K.D."/>
            <person name="Harris B."/>
            <person name="Quail M.A."/>
            <person name="Achtman M."/>
            <person name="Atkin R."/>
            <person name="Baker S."/>
            <person name="Basham D."/>
            <person name="Bason N."/>
            <person name="Cherevach I."/>
            <person name="Chillingworth T."/>
            <person name="Collins M."/>
            <person name="Cronin A."/>
            <person name="Davis P."/>
            <person name="Doggett J."/>
            <person name="Feltwell T."/>
            <person name="Goble A."/>
            <person name="Hamlin N."/>
            <person name="Hauser H."/>
            <person name="Holroyd S."/>
            <person name="Jagels K."/>
            <person name="Leather S."/>
            <person name="Moule S."/>
            <person name="Norberczak H."/>
            <person name="O'Neil S."/>
            <person name="Ormond D."/>
            <person name="Price C."/>
            <person name="Rabbinowitsch E."/>
            <person name="Rutter S."/>
            <person name="Sanders M."/>
            <person name="Saunders D."/>
            <person name="Seeger K."/>
            <person name="Sharp S."/>
            <person name="Simmonds M."/>
            <person name="Skelton J."/>
            <person name="Squares R."/>
            <person name="Squares S."/>
            <person name="Stevens K."/>
            <person name="Unwin L."/>
            <person name="Whitehead S."/>
            <person name="Barrell B.G."/>
            <person name="Maskell D.J."/>
        </authorList>
    </citation>
    <scope>NUCLEOTIDE SEQUENCE [LARGE SCALE GENOMIC DNA]</scope>
    <source>
        <strain>12822 / ATCC BAA-587 / NCTC 13253</strain>
    </source>
</reference>
<evidence type="ECO:0000255" key="1">
    <source>
        <dbReference type="HAMAP-Rule" id="MF_00381"/>
    </source>
</evidence>
<evidence type="ECO:0000256" key="2">
    <source>
        <dbReference type="SAM" id="MobiDB-lite"/>
    </source>
</evidence>
<keyword id="KW-0233">DNA recombination</keyword>
<keyword id="KW-0238">DNA-binding</keyword>
<keyword id="KW-0804">Transcription</keyword>
<keyword id="KW-0805">Transcription regulation</keyword>
<keyword id="KW-0810">Translation regulation</keyword>
<dbReference type="EMBL" id="BX640432">
    <property type="protein sequence ID" value="CAE38412.1"/>
    <property type="molecule type" value="Genomic_DNA"/>
</dbReference>
<dbReference type="RefSeq" id="WP_010928906.1">
    <property type="nucleotide sequence ID" value="NC_002928.3"/>
</dbReference>
<dbReference type="SMR" id="Q7W605"/>
<dbReference type="KEGG" id="bpa:BPP3127"/>
<dbReference type="HOGENOM" id="CLU_105066_2_0_4"/>
<dbReference type="Proteomes" id="UP000001421">
    <property type="component" value="Chromosome"/>
</dbReference>
<dbReference type="GO" id="GO:0005694">
    <property type="term" value="C:chromosome"/>
    <property type="evidence" value="ECO:0007669"/>
    <property type="project" value="InterPro"/>
</dbReference>
<dbReference type="GO" id="GO:0005829">
    <property type="term" value="C:cytosol"/>
    <property type="evidence" value="ECO:0007669"/>
    <property type="project" value="TreeGrafter"/>
</dbReference>
<dbReference type="GO" id="GO:0003677">
    <property type="term" value="F:DNA binding"/>
    <property type="evidence" value="ECO:0007669"/>
    <property type="project" value="UniProtKB-UniRule"/>
</dbReference>
<dbReference type="GO" id="GO:0030527">
    <property type="term" value="F:structural constituent of chromatin"/>
    <property type="evidence" value="ECO:0007669"/>
    <property type="project" value="InterPro"/>
</dbReference>
<dbReference type="GO" id="GO:0006310">
    <property type="term" value="P:DNA recombination"/>
    <property type="evidence" value="ECO:0007669"/>
    <property type="project" value="UniProtKB-UniRule"/>
</dbReference>
<dbReference type="GO" id="GO:0006355">
    <property type="term" value="P:regulation of DNA-templated transcription"/>
    <property type="evidence" value="ECO:0007669"/>
    <property type="project" value="UniProtKB-UniRule"/>
</dbReference>
<dbReference type="GO" id="GO:0006417">
    <property type="term" value="P:regulation of translation"/>
    <property type="evidence" value="ECO:0007669"/>
    <property type="project" value="UniProtKB-UniRule"/>
</dbReference>
<dbReference type="CDD" id="cd13836">
    <property type="entry name" value="IHF_B"/>
    <property type="match status" value="1"/>
</dbReference>
<dbReference type="Gene3D" id="4.10.520.10">
    <property type="entry name" value="IHF-like DNA-binding proteins"/>
    <property type="match status" value="1"/>
</dbReference>
<dbReference type="HAMAP" id="MF_00381">
    <property type="entry name" value="IHF_beta"/>
    <property type="match status" value="1"/>
</dbReference>
<dbReference type="InterPro" id="IPR000119">
    <property type="entry name" value="Hist_DNA-bd"/>
</dbReference>
<dbReference type="InterPro" id="IPR010992">
    <property type="entry name" value="IHF-like_DNA-bd_dom_sf"/>
</dbReference>
<dbReference type="InterPro" id="IPR005685">
    <property type="entry name" value="IHF_beta"/>
</dbReference>
<dbReference type="NCBIfam" id="TIGR00988">
    <property type="entry name" value="hip"/>
    <property type="match status" value="1"/>
</dbReference>
<dbReference type="NCBIfam" id="NF001222">
    <property type="entry name" value="PRK00199.1"/>
    <property type="match status" value="1"/>
</dbReference>
<dbReference type="PANTHER" id="PTHR33175">
    <property type="entry name" value="DNA-BINDING PROTEIN HU"/>
    <property type="match status" value="1"/>
</dbReference>
<dbReference type="PANTHER" id="PTHR33175:SF5">
    <property type="entry name" value="INTEGRATION HOST FACTOR SUBUNIT BETA"/>
    <property type="match status" value="1"/>
</dbReference>
<dbReference type="Pfam" id="PF00216">
    <property type="entry name" value="Bac_DNA_binding"/>
    <property type="match status" value="1"/>
</dbReference>
<dbReference type="PRINTS" id="PR01727">
    <property type="entry name" value="DNABINDINGHU"/>
</dbReference>
<dbReference type="SMART" id="SM00411">
    <property type="entry name" value="BHL"/>
    <property type="match status" value="1"/>
</dbReference>
<dbReference type="SUPFAM" id="SSF47729">
    <property type="entry name" value="IHF-like DNA-binding proteins"/>
    <property type="match status" value="1"/>
</dbReference>
<accession>Q7W605</accession>